<organism>
    <name type="scientific">Salmonella paratyphi C (strain RKS4594)</name>
    <dbReference type="NCBI Taxonomy" id="476213"/>
    <lineage>
        <taxon>Bacteria</taxon>
        <taxon>Pseudomonadati</taxon>
        <taxon>Pseudomonadota</taxon>
        <taxon>Gammaproteobacteria</taxon>
        <taxon>Enterobacterales</taxon>
        <taxon>Enterobacteriaceae</taxon>
        <taxon>Salmonella</taxon>
    </lineage>
</organism>
<protein>
    <recommendedName>
        <fullName evidence="1">Cell division protein FtsB</fullName>
    </recommendedName>
</protein>
<gene>
    <name evidence="1" type="primary">ftsB</name>
    <name type="ordered locus">SPC_2974</name>
</gene>
<name>FTSB_SALPC</name>
<comment type="function">
    <text evidence="1">Essential cell division protein. May link together the upstream cell division proteins, which are predominantly cytoplasmic, with the downstream cell division proteins, which are predominantly periplasmic.</text>
</comment>
<comment type="subunit">
    <text evidence="1">Part of a complex composed of FtsB, FtsL and FtsQ.</text>
</comment>
<comment type="subcellular location">
    <subcellularLocation>
        <location evidence="1">Cell inner membrane</location>
        <topology evidence="1">Single-pass type II membrane protein</topology>
    </subcellularLocation>
    <text evidence="1">Localizes to the division septum.</text>
</comment>
<comment type="similarity">
    <text evidence="1">Belongs to the FtsB family.</text>
</comment>
<sequence length="103" mass="11575">MGKLTLLLLALLVWLQYSLWFGKNGIHDYSRVNDDVVAQQATNAKLKARNDQLFAEIDDLNGGQEAIEERARNELSMTKPGETFYRLVPDASKRAATAGQTHR</sequence>
<feature type="chain" id="PRO_1000147007" description="Cell division protein FtsB">
    <location>
        <begin position="1"/>
        <end position="103"/>
    </location>
</feature>
<feature type="topological domain" description="Cytoplasmic" evidence="1">
    <location>
        <begin position="1"/>
        <end position="3"/>
    </location>
</feature>
<feature type="transmembrane region" description="Helical" evidence="1">
    <location>
        <begin position="4"/>
        <end position="21"/>
    </location>
</feature>
<feature type="topological domain" description="Periplasmic" evidence="1">
    <location>
        <begin position="22"/>
        <end position="103"/>
    </location>
</feature>
<feature type="coiled-coil region" evidence="1">
    <location>
        <begin position="33"/>
        <end position="62"/>
    </location>
</feature>
<evidence type="ECO:0000255" key="1">
    <source>
        <dbReference type="HAMAP-Rule" id="MF_00599"/>
    </source>
</evidence>
<dbReference type="EMBL" id="CP000857">
    <property type="protein sequence ID" value="ACN47066.1"/>
    <property type="molecule type" value="Genomic_DNA"/>
</dbReference>
<dbReference type="RefSeq" id="WP_000517480.1">
    <property type="nucleotide sequence ID" value="NC_012125.1"/>
</dbReference>
<dbReference type="SMR" id="C0PXA8"/>
<dbReference type="KEGG" id="sei:SPC_2974"/>
<dbReference type="HOGENOM" id="CLU_134863_5_2_6"/>
<dbReference type="Proteomes" id="UP000001599">
    <property type="component" value="Chromosome"/>
</dbReference>
<dbReference type="GO" id="GO:0032153">
    <property type="term" value="C:cell division site"/>
    <property type="evidence" value="ECO:0007669"/>
    <property type="project" value="UniProtKB-UniRule"/>
</dbReference>
<dbReference type="GO" id="GO:0030428">
    <property type="term" value="C:cell septum"/>
    <property type="evidence" value="ECO:0007669"/>
    <property type="project" value="TreeGrafter"/>
</dbReference>
<dbReference type="GO" id="GO:0005886">
    <property type="term" value="C:plasma membrane"/>
    <property type="evidence" value="ECO:0007669"/>
    <property type="project" value="UniProtKB-SubCell"/>
</dbReference>
<dbReference type="GO" id="GO:0043093">
    <property type="term" value="P:FtsZ-dependent cytokinesis"/>
    <property type="evidence" value="ECO:0007669"/>
    <property type="project" value="UniProtKB-UniRule"/>
</dbReference>
<dbReference type="FunFam" id="1.20.5.400:FF:000001">
    <property type="entry name" value="Cell division protein FtsB"/>
    <property type="match status" value="1"/>
</dbReference>
<dbReference type="Gene3D" id="1.20.5.400">
    <property type="match status" value="1"/>
</dbReference>
<dbReference type="HAMAP" id="MF_00599">
    <property type="entry name" value="FtsB"/>
    <property type="match status" value="1"/>
</dbReference>
<dbReference type="InterPro" id="IPR023081">
    <property type="entry name" value="Cell_div_FtsB"/>
</dbReference>
<dbReference type="InterPro" id="IPR007060">
    <property type="entry name" value="FtsL/DivIC"/>
</dbReference>
<dbReference type="NCBIfam" id="NF002058">
    <property type="entry name" value="PRK00888.1"/>
    <property type="match status" value="1"/>
</dbReference>
<dbReference type="PANTHER" id="PTHR37485">
    <property type="entry name" value="CELL DIVISION PROTEIN FTSB"/>
    <property type="match status" value="1"/>
</dbReference>
<dbReference type="PANTHER" id="PTHR37485:SF1">
    <property type="entry name" value="CELL DIVISION PROTEIN FTSB"/>
    <property type="match status" value="1"/>
</dbReference>
<dbReference type="Pfam" id="PF04977">
    <property type="entry name" value="DivIC"/>
    <property type="match status" value="1"/>
</dbReference>
<accession>C0PXA8</accession>
<keyword id="KW-0131">Cell cycle</keyword>
<keyword id="KW-0132">Cell division</keyword>
<keyword id="KW-0997">Cell inner membrane</keyword>
<keyword id="KW-1003">Cell membrane</keyword>
<keyword id="KW-0175">Coiled coil</keyword>
<keyword id="KW-0472">Membrane</keyword>
<keyword id="KW-0812">Transmembrane</keyword>
<keyword id="KW-1133">Transmembrane helix</keyword>
<proteinExistence type="inferred from homology"/>
<reference key="1">
    <citation type="journal article" date="2009" name="PLoS ONE">
        <title>Salmonella paratyphi C: genetic divergence from Salmonella choleraesuis and pathogenic convergence with Salmonella typhi.</title>
        <authorList>
            <person name="Liu W.-Q."/>
            <person name="Feng Y."/>
            <person name="Wang Y."/>
            <person name="Zou Q.-H."/>
            <person name="Chen F."/>
            <person name="Guo J.-T."/>
            <person name="Peng Y.-H."/>
            <person name="Jin Y."/>
            <person name="Li Y.-G."/>
            <person name="Hu S.-N."/>
            <person name="Johnston R.N."/>
            <person name="Liu G.-R."/>
            <person name="Liu S.-L."/>
        </authorList>
    </citation>
    <scope>NUCLEOTIDE SEQUENCE [LARGE SCALE GENOMIC DNA]</scope>
    <source>
        <strain>RKS4594</strain>
    </source>
</reference>